<dbReference type="EC" id="6.1.1.15" evidence="1"/>
<dbReference type="EMBL" id="CP001144">
    <property type="protein sequence ID" value="ACH74365.1"/>
    <property type="molecule type" value="Genomic_DNA"/>
</dbReference>
<dbReference type="RefSeq" id="WP_001260683.1">
    <property type="nucleotide sequence ID" value="NC_011205.1"/>
</dbReference>
<dbReference type="SMR" id="B5FJ42"/>
<dbReference type="KEGG" id="sed:SeD_A0264"/>
<dbReference type="HOGENOM" id="CLU_016739_0_0_6"/>
<dbReference type="Proteomes" id="UP000008322">
    <property type="component" value="Chromosome"/>
</dbReference>
<dbReference type="GO" id="GO:0005829">
    <property type="term" value="C:cytosol"/>
    <property type="evidence" value="ECO:0007669"/>
    <property type="project" value="TreeGrafter"/>
</dbReference>
<dbReference type="GO" id="GO:0002161">
    <property type="term" value="F:aminoacyl-tRNA deacylase activity"/>
    <property type="evidence" value="ECO:0007669"/>
    <property type="project" value="InterPro"/>
</dbReference>
<dbReference type="GO" id="GO:0005524">
    <property type="term" value="F:ATP binding"/>
    <property type="evidence" value="ECO:0007669"/>
    <property type="project" value="UniProtKB-UniRule"/>
</dbReference>
<dbReference type="GO" id="GO:0004827">
    <property type="term" value="F:proline-tRNA ligase activity"/>
    <property type="evidence" value="ECO:0007669"/>
    <property type="project" value="UniProtKB-UniRule"/>
</dbReference>
<dbReference type="GO" id="GO:0006433">
    <property type="term" value="P:prolyl-tRNA aminoacylation"/>
    <property type="evidence" value="ECO:0007669"/>
    <property type="project" value="UniProtKB-UniRule"/>
</dbReference>
<dbReference type="CDD" id="cd04334">
    <property type="entry name" value="ProRS-INS"/>
    <property type="match status" value="1"/>
</dbReference>
<dbReference type="CDD" id="cd00861">
    <property type="entry name" value="ProRS_anticodon_short"/>
    <property type="match status" value="1"/>
</dbReference>
<dbReference type="CDD" id="cd00779">
    <property type="entry name" value="ProRS_core_prok"/>
    <property type="match status" value="1"/>
</dbReference>
<dbReference type="FunFam" id="3.30.930.10:FF:000012">
    <property type="entry name" value="Proline--tRNA ligase"/>
    <property type="match status" value="1"/>
</dbReference>
<dbReference type="FunFam" id="3.30.930.10:FF:000097">
    <property type="entry name" value="Proline--tRNA ligase"/>
    <property type="match status" value="1"/>
</dbReference>
<dbReference type="FunFam" id="3.40.50.800:FF:000006">
    <property type="entry name" value="Proline--tRNA ligase"/>
    <property type="match status" value="1"/>
</dbReference>
<dbReference type="FunFam" id="3.90.960.10:FF:000001">
    <property type="entry name" value="Proline--tRNA ligase"/>
    <property type="match status" value="1"/>
</dbReference>
<dbReference type="Gene3D" id="3.40.50.800">
    <property type="entry name" value="Anticodon-binding domain"/>
    <property type="match status" value="1"/>
</dbReference>
<dbReference type="Gene3D" id="3.30.930.10">
    <property type="entry name" value="Bira Bifunctional Protein, Domain 2"/>
    <property type="match status" value="2"/>
</dbReference>
<dbReference type="Gene3D" id="3.90.960.10">
    <property type="entry name" value="YbaK/aminoacyl-tRNA synthetase-associated domain"/>
    <property type="match status" value="1"/>
</dbReference>
<dbReference type="HAMAP" id="MF_01569">
    <property type="entry name" value="Pro_tRNA_synth_type1"/>
    <property type="match status" value="1"/>
</dbReference>
<dbReference type="InterPro" id="IPR002314">
    <property type="entry name" value="aa-tRNA-synt_IIb"/>
</dbReference>
<dbReference type="InterPro" id="IPR006195">
    <property type="entry name" value="aa-tRNA-synth_II"/>
</dbReference>
<dbReference type="InterPro" id="IPR045864">
    <property type="entry name" value="aa-tRNA-synth_II/BPL/LPL"/>
</dbReference>
<dbReference type="InterPro" id="IPR004154">
    <property type="entry name" value="Anticodon-bd"/>
</dbReference>
<dbReference type="InterPro" id="IPR036621">
    <property type="entry name" value="Anticodon-bd_dom_sf"/>
</dbReference>
<dbReference type="InterPro" id="IPR002316">
    <property type="entry name" value="Pro-tRNA-ligase_IIa"/>
</dbReference>
<dbReference type="InterPro" id="IPR004500">
    <property type="entry name" value="Pro-tRNA-synth_IIa_bac-type"/>
</dbReference>
<dbReference type="InterPro" id="IPR023717">
    <property type="entry name" value="Pro-tRNA-Synthase_IIa_type1"/>
</dbReference>
<dbReference type="InterPro" id="IPR050062">
    <property type="entry name" value="Pro-tRNA_synthetase"/>
</dbReference>
<dbReference type="InterPro" id="IPR044140">
    <property type="entry name" value="ProRS_anticodon_short"/>
</dbReference>
<dbReference type="InterPro" id="IPR033730">
    <property type="entry name" value="ProRS_core_prok"/>
</dbReference>
<dbReference type="InterPro" id="IPR036754">
    <property type="entry name" value="YbaK/aa-tRNA-synt-asso_dom_sf"/>
</dbReference>
<dbReference type="InterPro" id="IPR007214">
    <property type="entry name" value="YbaK/aa-tRNA-synth-assoc-dom"/>
</dbReference>
<dbReference type="NCBIfam" id="NF006625">
    <property type="entry name" value="PRK09194.1"/>
    <property type="match status" value="1"/>
</dbReference>
<dbReference type="NCBIfam" id="TIGR00409">
    <property type="entry name" value="proS_fam_II"/>
    <property type="match status" value="1"/>
</dbReference>
<dbReference type="PANTHER" id="PTHR42753">
    <property type="entry name" value="MITOCHONDRIAL RIBOSOME PROTEIN L39/PROLYL-TRNA LIGASE FAMILY MEMBER"/>
    <property type="match status" value="1"/>
</dbReference>
<dbReference type="PANTHER" id="PTHR42753:SF2">
    <property type="entry name" value="PROLINE--TRNA LIGASE"/>
    <property type="match status" value="1"/>
</dbReference>
<dbReference type="Pfam" id="PF03129">
    <property type="entry name" value="HGTP_anticodon"/>
    <property type="match status" value="1"/>
</dbReference>
<dbReference type="Pfam" id="PF00587">
    <property type="entry name" value="tRNA-synt_2b"/>
    <property type="match status" value="1"/>
</dbReference>
<dbReference type="Pfam" id="PF04073">
    <property type="entry name" value="tRNA_edit"/>
    <property type="match status" value="1"/>
</dbReference>
<dbReference type="PIRSF" id="PIRSF001535">
    <property type="entry name" value="ProRS_1"/>
    <property type="match status" value="1"/>
</dbReference>
<dbReference type="PRINTS" id="PR01046">
    <property type="entry name" value="TRNASYNTHPRO"/>
</dbReference>
<dbReference type="SUPFAM" id="SSF52954">
    <property type="entry name" value="Class II aaRS ABD-related"/>
    <property type="match status" value="1"/>
</dbReference>
<dbReference type="SUPFAM" id="SSF55681">
    <property type="entry name" value="Class II aaRS and biotin synthetases"/>
    <property type="match status" value="1"/>
</dbReference>
<dbReference type="SUPFAM" id="SSF55826">
    <property type="entry name" value="YbaK/ProRS associated domain"/>
    <property type="match status" value="1"/>
</dbReference>
<dbReference type="PROSITE" id="PS50862">
    <property type="entry name" value="AA_TRNA_LIGASE_II"/>
    <property type="match status" value="1"/>
</dbReference>
<accession>B5FJ42</accession>
<feature type="chain" id="PRO_1000199415" description="Proline--tRNA ligase">
    <location>
        <begin position="1"/>
        <end position="572"/>
    </location>
</feature>
<sequence length="572" mass="63540">MRTSQYLLSTLKETPADAEVISHQLMLRAGMIRKLASGLYTWLPTGLRVLKKVENIVREEMNNAGAIEVSMPVVQPADLWQESGRWEQYGPELLRFVDRGERPFVLGPTHEEVITDLVRNELSSYKQLPLNFFQIQTKFRDEVRPRFGVMRSREFLMKDAYSFHTSQESLQETYDAMYAAYSRIFSRMGLDFRAVQADTGSIGGNASHEFQVLAQSGEDDIVFSDVSDYAANIELAEAIAPQTPRAAATQEMTLVDTPNAKTIAELVEQFNLPIEKTVKTLLVKAVKDSKSPLVALLVRGDHELNEVKAEKLPHVASPLTFATEEEIRAVINAGPGSLGPVNMPIPVIIDRTVAAMSDFAAGANIDGKHYFGINWDRDVATPVVADIRNVVAGDPSPDGQGTLLIKRGIEVGHIFQLGTKYSEALKASVQGEDGRNQILTMGCYGIGVTRVVAAAIEQNFDERGIVWPDAIAPFQVAILPMNMHKSFRVQELAEKLYSELRAQGIEVLMDDRKERPGVMFADMELIGIPHTIVIGDRNLDNDDIEYKYRRSGEKSLIKTGDIVDYLVKAIKG</sequence>
<comment type="function">
    <text evidence="1">Catalyzes the attachment of proline to tRNA(Pro) in a two-step reaction: proline is first activated by ATP to form Pro-AMP and then transferred to the acceptor end of tRNA(Pro). As ProRS can inadvertently accommodate and process non-cognate amino acids such as alanine and cysteine, to avoid such errors it has two additional distinct editing activities against alanine. One activity is designated as 'pretransfer' editing and involves the tRNA(Pro)-independent hydrolysis of activated Ala-AMP. The other activity is designated 'posttransfer' editing and involves deacylation of mischarged Ala-tRNA(Pro). The misacylated Cys-tRNA(Pro) is not edited by ProRS.</text>
</comment>
<comment type="catalytic activity">
    <reaction evidence="1">
        <text>tRNA(Pro) + L-proline + ATP = L-prolyl-tRNA(Pro) + AMP + diphosphate</text>
        <dbReference type="Rhea" id="RHEA:14305"/>
        <dbReference type="Rhea" id="RHEA-COMP:9700"/>
        <dbReference type="Rhea" id="RHEA-COMP:9702"/>
        <dbReference type="ChEBI" id="CHEBI:30616"/>
        <dbReference type="ChEBI" id="CHEBI:33019"/>
        <dbReference type="ChEBI" id="CHEBI:60039"/>
        <dbReference type="ChEBI" id="CHEBI:78442"/>
        <dbReference type="ChEBI" id="CHEBI:78532"/>
        <dbReference type="ChEBI" id="CHEBI:456215"/>
        <dbReference type="EC" id="6.1.1.15"/>
    </reaction>
</comment>
<comment type="subunit">
    <text evidence="1">Homodimer.</text>
</comment>
<comment type="subcellular location">
    <subcellularLocation>
        <location evidence="1">Cytoplasm</location>
    </subcellularLocation>
</comment>
<comment type="domain">
    <text evidence="1">Consists of three domains: the N-terminal catalytic domain, the editing domain and the C-terminal anticodon-binding domain.</text>
</comment>
<comment type="similarity">
    <text evidence="1">Belongs to the class-II aminoacyl-tRNA synthetase family. ProS type 1 subfamily.</text>
</comment>
<gene>
    <name evidence="1" type="primary">proS</name>
    <name type="ordered locus">SeD_A0264</name>
</gene>
<organism>
    <name type="scientific">Salmonella dublin (strain CT_02021853)</name>
    <dbReference type="NCBI Taxonomy" id="439851"/>
    <lineage>
        <taxon>Bacteria</taxon>
        <taxon>Pseudomonadati</taxon>
        <taxon>Pseudomonadota</taxon>
        <taxon>Gammaproteobacteria</taxon>
        <taxon>Enterobacterales</taxon>
        <taxon>Enterobacteriaceae</taxon>
        <taxon>Salmonella</taxon>
    </lineage>
</organism>
<evidence type="ECO:0000255" key="1">
    <source>
        <dbReference type="HAMAP-Rule" id="MF_01569"/>
    </source>
</evidence>
<proteinExistence type="inferred from homology"/>
<reference key="1">
    <citation type="journal article" date="2011" name="J. Bacteriol.">
        <title>Comparative genomics of 28 Salmonella enterica isolates: evidence for CRISPR-mediated adaptive sublineage evolution.</title>
        <authorList>
            <person name="Fricke W.F."/>
            <person name="Mammel M.K."/>
            <person name="McDermott P.F."/>
            <person name="Tartera C."/>
            <person name="White D.G."/>
            <person name="Leclerc J.E."/>
            <person name="Ravel J."/>
            <person name="Cebula T.A."/>
        </authorList>
    </citation>
    <scope>NUCLEOTIDE SEQUENCE [LARGE SCALE GENOMIC DNA]</scope>
    <source>
        <strain>CT_02021853</strain>
    </source>
</reference>
<protein>
    <recommendedName>
        <fullName evidence="1">Proline--tRNA ligase</fullName>
        <ecNumber evidence="1">6.1.1.15</ecNumber>
    </recommendedName>
    <alternativeName>
        <fullName evidence="1">Prolyl-tRNA synthetase</fullName>
        <shortName evidence="1">ProRS</shortName>
    </alternativeName>
</protein>
<keyword id="KW-0030">Aminoacyl-tRNA synthetase</keyword>
<keyword id="KW-0067">ATP-binding</keyword>
<keyword id="KW-0963">Cytoplasm</keyword>
<keyword id="KW-0436">Ligase</keyword>
<keyword id="KW-0547">Nucleotide-binding</keyword>
<keyword id="KW-0648">Protein biosynthesis</keyword>
<name>SYP_SALDC</name>